<protein>
    <recommendedName>
        <fullName evidence="1">Outer-membrane lipoprotein LolB</fullName>
    </recommendedName>
</protein>
<name>LOLB_ECOL5</name>
<sequence length="207" mass="23601">MPLPDFRFIRLLPLAALVLTACSVTTPKGPGKSPDSPQWRQHQQDVRNLNQYQTRGAFAYISDQQKVYARFFWQQTGQDRYRLLLTNPLGSTELELNAQPGNVQLVDNKGQRYTSDDAEEMIGKLTGMPIPLNSLRQWILGLPGDATDYKLDDQYRLSEITYSQNGKNWKVVYGGYDTKTQPAMPANMELTDGGQRIKLKMDNWIVK</sequence>
<evidence type="ECO:0000255" key="1">
    <source>
        <dbReference type="HAMAP-Rule" id="MF_00233"/>
    </source>
</evidence>
<feature type="signal peptide" evidence="1">
    <location>
        <begin position="1"/>
        <end position="21"/>
    </location>
</feature>
<feature type="chain" id="PRO_1000021661" description="Outer-membrane lipoprotein LolB">
    <location>
        <begin position="22"/>
        <end position="207"/>
    </location>
</feature>
<feature type="lipid moiety-binding region" description="N-palmitoyl cysteine" evidence="1">
    <location>
        <position position="22"/>
    </location>
</feature>
<feature type="lipid moiety-binding region" description="S-diacylglycerol cysteine" evidence="1">
    <location>
        <position position="22"/>
    </location>
</feature>
<reference key="1">
    <citation type="journal article" date="2006" name="Mol. Microbiol.">
        <title>Role of pathogenicity island-associated integrases in the genome plasticity of uropathogenic Escherichia coli strain 536.</title>
        <authorList>
            <person name="Hochhut B."/>
            <person name="Wilde C."/>
            <person name="Balling G."/>
            <person name="Middendorf B."/>
            <person name="Dobrindt U."/>
            <person name="Brzuszkiewicz E."/>
            <person name="Gottschalk G."/>
            <person name="Carniel E."/>
            <person name="Hacker J."/>
        </authorList>
    </citation>
    <scope>NUCLEOTIDE SEQUENCE [LARGE SCALE GENOMIC DNA]</scope>
    <source>
        <strain>536 / UPEC</strain>
    </source>
</reference>
<keyword id="KW-0998">Cell outer membrane</keyword>
<keyword id="KW-0143">Chaperone</keyword>
<keyword id="KW-0449">Lipoprotein</keyword>
<keyword id="KW-0472">Membrane</keyword>
<keyword id="KW-0564">Palmitate</keyword>
<keyword id="KW-0653">Protein transport</keyword>
<keyword id="KW-0732">Signal</keyword>
<keyword id="KW-0813">Transport</keyword>
<comment type="function">
    <text evidence="1">Plays a critical role in the incorporation of lipoproteins in the outer membrane after they are released by the LolA protein.</text>
</comment>
<comment type="subunit">
    <text evidence="1">Monomer.</text>
</comment>
<comment type="subcellular location">
    <subcellularLocation>
        <location evidence="1">Cell outer membrane</location>
        <topology evidence="1">Lipid-anchor</topology>
    </subcellularLocation>
</comment>
<comment type="similarity">
    <text evidence="1">Belongs to the LolB family.</text>
</comment>
<organism>
    <name type="scientific">Escherichia coli O6:K15:H31 (strain 536 / UPEC)</name>
    <dbReference type="NCBI Taxonomy" id="362663"/>
    <lineage>
        <taxon>Bacteria</taxon>
        <taxon>Pseudomonadati</taxon>
        <taxon>Pseudomonadota</taxon>
        <taxon>Gammaproteobacteria</taxon>
        <taxon>Enterobacterales</taxon>
        <taxon>Enterobacteriaceae</taxon>
        <taxon>Escherichia</taxon>
    </lineage>
</organism>
<accession>Q0TIG1</accession>
<dbReference type="EMBL" id="CP000247">
    <property type="protein sequence ID" value="ABG69268.1"/>
    <property type="molecule type" value="Genomic_DNA"/>
</dbReference>
<dbReference type="RefSeq" id="WP_001130679.1">
    <property type="nucleotide sequence ID" value="NC_008253.1"/>
</dbReference>
<dbReference type="SMR" id="Q0TIG1"/>
<dbReference type="KEGG" id="ecp:ECP_1257"/>
<dbReference type="HOGENOM" id="CLU_092816_1_1_6"/>
<dbReference type="Proteomes" id="UP000009182">
    <property type="component" value="Chromosome"/>
</dbReference>
<dbReference type="GO" id="GO:0009279">
    <property type="term" value="C:cell outer membrane"/>
    <property type="evidence" value="ECO:0007669"/>
    <property type="project" value="UniProtKB-SubCell"/>
</dbReference>
<dbReference type="GO" id="GO:0044874">
    <property type="term" value="P:lipoprotein localization to outer membrane"/>
    <property type="evidence" value="ECO:0007669"/>
    <property type="project" value="UniProtKB-UniRule"/>
</dbReference>
<dbReference type="GO" id="GO:0015031">
    <property type="term" value="P:protein transport"/>
    <property type="evidence" value="ECO:0007669"/>
    <property type="project" value="UniProtKB-KW"/>
</dbReference>
<dbReference type="CDD" id="cd16326">
    <property type="entry name" value="LolB"/>
    <property type="match status" value="1"/>
</dbReference>
<dbReference type="FunFam" id="2.50.20.10:FF:000002">
    <property type="entry name" value="Outer-membrane lipoprotein LolB"/>
    <property type="match status" value="1"/>
</dbReference>
<dbReference type="Gene3D" id="2.50.20.10">
    <property type="entry name" value="Lipoprotein localisation LolA/LolB/LppX"/>
    <property type="match status" value="1"/>
</dbReference>
<dbReference type="HAMAP" id="MF_00233">
    <property type="entry name" value="LolB"/>
    <property type="match status" value="1"/>
</dbReference>
<dbReference type="InterPro" id="IPR029046">
    <property type="entry name" value="LolA/LolB/LppX"/>
</dbReference>
<dbReference type="InterPro" id="IPR004565">
    <property type="entry name" value="OM_lipoprot_LolB"/>
</dbReference>
<dbReference type="NCBIfam" id="TIGR00548">
    <property type="entry name" value="lolB"/>
    <property type="match status" value="1"/>
</dbReference>
<dbReference type="Pfam" id="PF03550">
    <property type="entry name" value="LolB"/>
    <property type="match status" value="1"/>
</dbReference>
<dbReference type="SUPFAM" id="SSF89392">
    <property type="entry name" value="Prokaryotic lipoproteins and lipoprotein localization factors"/>
    <property type="match status" value="1"/>
</dbReference>
<dbReference type="PROSITE" id="PS51257">
    <property type="entry name" value="PROKAR_LIPOPROTEIN"/>
    <property type="match status" value="1"/>
</dbReference>
<gene>
    <name evidence="1" type="primary">lolB</name>
    <name type="ordered locus">ECP_1257</name>
</gene>
<proteinExistence type="inferred from homology"/>